<organism>
    <name type="scientific">Salmonella choleraesuis (strain SC-B67)</name>
    <dbReference type="NCBI Taxonomy" id="321314"/>
    <lineage>
        <taxon>Bacteria</taxon>
        <taxon>Pseudomonadati</taxon>
        <taxon>Pseudomonadota</taxon>
        <taxon>Gammaproteobacteria</taxon>
        <taxon>Enterobacterales</taxon>
        <taxon>Enterobacteriaceae</taxon>
        <taxon>Salmonella</taxon>
    </lineage>
</organism>
<feature type="chain" id="PRO_0000301617" description="Aspartate carbamoyltransferase catalytic subunit">
    <location>
        <begin position="1"/>
        <end position="311"/>
    </location>
</feature>
<feature type="binding site" evidence="1">
    <location>
        <position position="55"/>
    </location>
    <ligand>
        <name>carbamoyl phosphate</name>
        <dbReference type="ChEBI" id="CHEBI:58228"/>
    </ligand>
</feature>
<feature type="binding site" evidence="1">
    <location>
        <position position="56"/>
    </location>
    <ligand>
        <name>carbamoyl phosphate</name>
        <dbReference type="ChEBI" id="CHEBI:58228"/>
    </ligand>
</feature>
<feature type="binding site" evidence="1">
    <location>
        <position position="85"/>
    </location>
    <ligand>
        <name>L-aspartate</name>
        <dbReference type="ChEBI" id="CHEBI:29991"/>
    </ligand>
</feature>
<feature type="binding site" evidence="1">
    <location>
        <position position="106"/>
    </location>
    <ligand>
        <name>carbamoyl phosphate</name>
        <dbReference type="ChEBI" id="CHEBI:58228"/>
    </ligand>
</feature>
<feature type="binding site" evidence="1">
    <location>
        <position position="135"/>
    </location>
    <ligand>
        <name>carbamoyl phosphate</name>
        <dbReference type="ChEBI" id="CHEBI:58228"/>
    </ligand>
</feature>
<feature type="binding site" evidence="1">
    <location>
        <position position="138"/>
    </location>
    <ligand>
        <name>carbamoyl phosphate</name>
        <dbReference type="ChEBI" id="CHEBI:58228"/>
    </ligand>
</feature>
<feature type="binding site" evidence="1">
    <location>
        <position position="168"/>
    </location>
    <ligand>
        <name>L-aspartate</name>
        <dbReference type="ChEBI" id="CHEBI:29991"/>
    </ligand>
</feature>
<feature type="binding site" evidence="1">
    <location>
        <position position="230"/>
    </location>
    <ligand>
        <name>L-aspartate</name>
        <dbReference type="ChEBI" id="CHEBI:29991"/>
    </ligand>
</feature>
<feature type="binding site" evidence="1">
    <location>
        <position position="268"/>
    </location>
    <ligand>
        <name>carbamoyl phosphate</name>
        <dbReference type="ChEBI" id="CHEBI:58228"/>
    </ligand>
</feature>
<feature type="binding site" evidence="1">
    <location>
        <position position="269"/>
    </location>
    <ligand>
        <name>carbamoyl phosphate</name>
        <dbReference type="ChEBI" id="CHEBI:58228"/>
    </ligand>
</feature>
<proteinExistence type="inferred from homology"/>
<comment type="function">
    <text evidence="1">Catalyzes the condensation of carbamoyl phosphate and aspartate to form carbamoyl aspartate and inorganic phosphate, the committed step in the de novo pyrimidine nucleotide biosynthesis pathway.</text>
</comment>
<comment type="catalytic activity">
    <reaction evidence="1">
        <text>carbamoyl phosphate + L-aspartate = N-carbamoyl-L-aspartate + phosphate + H(+)</text>
        <dbReference type="Rhea" id="RHEA:20013"/>
        <dbReference type="ChEBI" id="CHEBI:15378"/>
        <dbReference type="ChEBI" id="CHEBI:29991"/>
        <dbReference type="ChEBI" id="CHEBI:32814"/>
        <dbReference type="ChEBI" id="CHEBI:43474"/>
        <dbReference type="ChEBI" id="CHEBI:58228"/>
        <dbReference type="EC" id="2.1.3.2"/>
    </reaction>
</comment>
<comment type="pathway">
    <text evidence="1">Pyrimidine metabolism; UMP biosynthesis via de novo pathway; (S)-dihydroorotate from bicarbonate: step 2/3.</text>
</comment>
<comment type="subunit">
    <text evidence="1">Heterododecamer (2C3:3R2) of six catalytic PyrB chains organized as two trimers (C3), and six regulatory PyrI chains organized as three dimers (R2).</text>
</comment>
<comment type="similarity">
    <text evidence="1">Belongs to the aspartate/ornithine carbamoyltransferase superfamily. ATCase family.</text>
</comment>
<dbReference type="EC" id="2.1.3.2" evidence="1"/>
<dbReference type="EMBL" id="AE017220">
    <property type="protein sequence ID" value="AAX68221.1"/>
    <property type="molecule type" value="Genomic_DNA"/>
</dbReference>
<dbReference type="RefSeq" id="WP_000013055.1">
    <property type="nucleotide sequence ID" value="NC_006905.1"/>
</dbReference>
<dbReference type="SMR" id="Q57GE1"/>
<dbReference type="KEGG" id="sec:SCH_4315"/>
<dbReference type="HOGENOM" id="CLU_043846_1_2_6"/>
<dbReference type="UniPathway" id="UPA00070">
    <property type="reaction ID" value="UER00116"/>
</dbReference>
<dbReference type="Proteomes" id="UP000000538">
    <property type="component" value="Chromosome"/>
</dbReference>
<dbReference type="GO" id="GO:0005829">
    <property type="term" value="C:cytosol"/>
    <property type="evidence" value="ECO:0007669"/>
    <property type="project" value="TreeGrafter"/>
</dbReference>
<dbReference type="GO" id="GO:0016597">
    <property type="term" value="F:amino acid binding"/>
    <property type="evidence" value="ECO:0007669"/>
    <property type="project" value="InterPro"/>
</dbReference>
<dbReference type="GO" id="GO:0004070">
    <property type="term" value="F:aspartate carbamoyltransferase activity"/>
    <property type="evidence" value="ECO:0007669"/>
    <property type="project" value="UniProtKB-UniRule"/>
</dbReference>
<dbReference type="GO" id="GO:0006207">
    <property type="term" value="P:'de novo' pyrimidine nucleobase biosynthetic process"/>
    <property type="evidence" value="ECO:0007669"/>
    <property type="project" value="InterPro"/>
</dbReference>
<dbReference type="GO" id="GO:0044205">
    <property type="term" value="P:'de novo' UMP biosynthetic process"/>
    <property type="evidence" value="ECO:0007669"/>
    <property type="project" value="UniProtKB-UniRule"/>
</dbReference>
<dbReference type="GO" id="GO:0006520">
    <property type="term" value="P:amino acid metabolic process"/>
    <property type="evidence" value="ECO:0007669"/>
    <property type="project" value="InterPro"/>
</dbReference>
<dbReference type="FunFam" id="3.40.50.1370:FF:000001">
    <property type="entry name" value="Aspartate carbamoyltransferase"/>
    <property type="match status" value="1"/>
</dbReference>
<dbReference type="FunFam" id="3.40.50.1370:FF:000002">
    <property type="entry name" value="Aspartate carbamoyltransferase 2"/>
    <property type="match status" value="1"/>
</dbReference>
<dbReference type="Gene3D" id="3.40.50.1370">
    <property type="entry name" value="Aspartate/ornithine carbamoyltransferase"/>
    <property type="match status" value="2"/>
</dbReference>
<dbReference type="HAMAP" id="MF_00001">
    <property type="entry name" value="Asp_carb_tr"/>
    <property type="match status" value="1"/>
</dbReference>
<dbReference type="InterPro" id="IPR006132">
    <property type="entry name" value="Asp/Orn_carbamoyltranf_P-bd"/>
</dbReference>
<dbReference type="InterPro" id="IPR006130">
    <property type="entry name" value="Asp/Orn_carbamoylTrfase"/>
</dbReference>
<dbReference type="InterPro" id="IPR036901">
    <property type="entry name" value="Asp/Orn_carbamoylTrfase_sf"/>
</dbReference>
<dbReference type="InterPro" id="IPR002082">
    <property type="entry name" value="Asp_carbamoyltransf"/>
</dbReference>
<dbReference type="InterPro" id="IPR006131">
    <property type="entry name" value="Asp_carbamoyltransf_Asp/Orn-bd"/>
</dbReference>
<dbReference type="NCBIfam" id="TIGR00670">
    <property type="entry name" value="asp_carb_tr"/>
    <property type="match status" value="1"/>
</dbReference>
<dbReference type="NCBIfam" id="NF002032">
    <property type="entry name" value="PRK00856.1"/>
    <property type="match status" value="1"/>
</dbReference>
<dbReference type="PANTHER" id="PTHR45753:SF6">
    <property type="entry name" value="ASPARTATE CARBAMOYLTRANSFERASE"/>
    <property type="match status" value="1"/>
</dbReference>
<dbReference type="PANTHER" id="PTHR45753">
    <property type="entry name" value="ORNITHINE CARBAMOYLTRANSFERASE, MITOCHONDRIAL"/>
    <property type="match status" value="1"/>
</dbReference>
<dbReference type="Pfam" id="PF00185">
    <property type="entry name" value="OTCace"/>
    <property type="match status" value="1"/>
</dbReference>
<dbReference type="Pfam" id="PF02729">
    <property type="entry name" value="OTCace_N"/>
    <property type="match status" value="1"/>
</dbReference>
<dbReference type="PRINTS" id="PR00100">
    <property type="entry name" value="AOTCASE"/>
</dbReference>
<dbReference type="PRINTS" id="PR00101">
    <property type="entry name" value="ATCASE"/>
</dbReference>
<dbReference type="SUPFAM" id="SSF53671">
    <property type="entry name" value="Aspartate/ornithine carbamoyltransferase"/>
    <property type="match status" value="1"/>
</dbReference>
<dbReference type="PROSITE" id="PS00097">
    <property type="entry name" value="CARBAMOYLTRANSFERASE"/>
    <property type="match status" value="1"/>
</dbReference>
<evidence type="ECO:0000255" key="1">
    <source>
        <dbReference type="HAMAP-Rule" id="MF_00001"/>
    </source>
</evidence>
<protein>
    <recommendedName>
        <fullName evidence="1">Aspartate carbamoyltransferase catalytic subunit</fullName>
        <ecNumber evidence="1">2.1.3.2</ecNumber>
    </recommendedName>
    <alternativeName>
        <fullName evidence="1">Aspartate transcarbamylase</fullName>
        <shortName evidence="1">ATCase</shortName>
    </alternativeName>
</protein>
<keyword id="KW-0665">Pyrimidine biosynthesis</keyword>
<keyword id="KW-0808">Transferase</keyword>
<reference key="1">
    <citation type="journal article" date="2005" name="Nucleic Acids Res.">
        <title>The genome sequence of Salmonella enterica serovar Choleraesuis, a highly invasive and resistant zoonotic pathogen.</title>
        <authorList>
            <person name="Chiu C.-H."/>
            <person name="Tang P."/>
            <person name="Chu C."/>
            <person name="Hu S."/>
            <person name="Bao Q."/>
            <person name="Yu J."/>
            <person name="Chou Y.-Y."/>
            <person name="Wang H.-S."/>
            <person name="Lee Y.-S."/>
        </authorList>
    </citation>
    <scope>NUCLEOTIDE SEQUENCE [LARGE SCALE GENOMIC DNA]</scope>
    <source>
        <strain>SC-B67</strain>
    </source>
</reference>
<gene>
    <name evidence="1" type="primary">pyrB</name>
    <name type="ordered locus">SCH_4315</name>
</gene>
<accession>Q57GE1</accession>
<name>PYRB_SALCH</name>
<sequence length="311" mass="34384">MANPLYQKHIISINDLSRDDLNLVLATAAKLKANPQPELLKHKVIASCFFEASTRTRLSFETSMHRLGASVVGFSDSANTSLGKKGETLADTISVISTYVDAIVMRHPQEGAARLATEFSGQVPVLNAGDGSNQHPTQTLLDLFTIQETQGRLDNLHIAMVGDLKYGRTVHSLTQALAKFSGNRFYFIAPDALAMPQYILDMLDEKGMAWSLHGSIEEVMADVDILYMTRVQKERLDPSEYANVKAQFVLRASDLNGARENMKVLHPLPRIDEITTDVDKTPHAWYFQQAGNGIFARQALLALVLNSELSL</sequence>